<organism>
    <name type="scientific">Canis lupus familiaris</name>
    <name type="common">Dog</name>
    <name type="synonym">Canis familiaris</name>
    <dbReference type="NCBI Taxonomy" id="9615"/>
    <lineage>
        <taxon>Eukaryota</taxon>
        <taxon>Metazoa</taxon>
        <taxon>Chordata</taxon>
        <taxon>Craniata</taxon>
        <taxon>Vertebrata</taxon>
        <taxon>Euteleostomi</taxon>
        <taxon>Mammalia</taxon>
        <taxon>Eutheria</taxon>
        <taxon>Laurasiatheria</taxon>
        <taxon>Carnivora</taxon>
        <taxon>Caniformia</taxon>
        <taxon>Canidae</taxon>
        <taxon>Canis</taxon>
    </lineage>
</organism>
<feature type="chain" id="PRO_0000209718" description="Inositol polyphosphate-5-phosphatase A">
    <location>
        <begin position="1"/>
        <end position="409"/>
    </location>
</feature>
<feature type="propeptide" id="PRO_0000396779" description="Removed in mature form" evidence="1">
    <location>
        <begin position="410"/>
        <end position="412"/>
    </location>
</feature>
<feature type="lipid moiety-binding region" description="S-farnesyl cysteine" evidence="1">
    <location>
        <position position="409"/>
    </location>
</feature>
<gene>
    <name type="primary">INPP5A</name>
</gene>
<reference key="1">
    <citation type="journal article" date="1994" name="Biochem. J.">
        <title>Cloning and expression in Escherichia coli of a dog thyroid cDNA encoding a novel inositol 1,4,5-trisphosphate 5-phosphatase.</title>
        <authorList>
            <person name="Verjans B."/>
            <person name="de Smedt F."/>
            <person name="Lecocq R."/>
            <person name="Vanweyenberg V."/>
            <person name="Moreau C."/>
            <person name="Erneux C."/>
        </authorList>
    </citation>
    <scope>NUCLEOTIDE SEQUENCE [MRNA]</scope>
    <scope>CATALYTIC ACTIVITY</scope>
    <scope>FUNCTION</scope>
    <scope>ACTIVITY REGULATION</scope>
    <scope>BIOPHYSICOCHEMICAL PROPERTIES</scope>
    <source>
        <tissue>Thyroid</tissue>
    </source>
</reference>
<proteinExistence type="evidence at protein level"/>
<evidence type="ECO:0000250" key="1">
    <source>
        <dbReference type="UniProtKB" id="Q14642"/>
    </source>
</evidence>
<evidence type="ECO:0000250" key="2">
    <source>
        <dbReference type="UniProtKB" id="Q7TNC9"/>
    </source>
</evidence>
<evidence type="ECO:0000269" key="3">
    <source>
    </source>
</evidence>
<evidence type="ECO:0000305" key="4"/>
<evidence type="ECO:0000305" key="5">
    <source>
    </source>
</evidence>
<dbReference type="EC" id="3.1.3.56" evidence="3"/>
<dbReference type="EMBL" id="X75094">
    <property type="protein sequence ID" value="CAA52985.1"/>
    <property type="molecule type" value="mRNA"/>
</dbReference>
<dbReference type="PIR" id="S44357">
    <property type="entry name" value="S44357"/>
</dbReference>
<dbReference type="RefSeq" id="NP_001003257.1">
    <property type="nucleotide sequence ID" value="NM_001003257.1"/>
</dbReference>
<dbReference type="FunCoup" id="Q29467">
    <property type="interactions" value="277"/>
</dbReference>
<dbReference type="STRING" id="9615.ENSCAFP00000059866"/>
<dbReference type="PaxDb" id="9612-ENSCAFP00000016395"/>
<dbReference type="GeneID" id="403937"/>
<dbReference type="KEGG" id="cfa:403937"/>
<dbReference type="CTD" id="3632"/>
<dbReference type="eggNOG" id="KOG1976">
    <property type="taxonomic scope" value="Eukaryota"/>
</dbReference>
<dbReference type="InParanoid" id="Q29467"/>
<dbReference type="OrthoDB" id="5780965at2759"/>
<dbReference type="BRENDA" id="3.1.3.56">
    <property type="organism ID" value="1153"/>
</dbReference>
<dbReference type="Proteomes" id="UP000002254">
    <property type="component" value="Unplaced"/>
</dbReference>
<dbReference type="Proteomes" id="UP000694429">
    <property type="component" value="Unplaced"/>
</dbReference>
<dbReference type="Proteomes" id="UP000694542">
    <property type="component" value="Unplaced"/>
</dbReference>
<dbReference type="Proteomes" id="UP000805418">
    <property type="component" value="Unplaced"/>
</dbReference>
<dbReference type="GO" id="GO:0030425">
    <property type="term" value="C:dendrite"/>
    <property type="evidence" value="ECO:0000250"/>
    <property type="project" value="UniProtKB"/>
</dbReference>
<dbReference type="GO" id="GO:0005886">
    <property type="term" value="C:plasma membrane"/>
    <property type="evidence" value="ECO:0000250"/>
    <property type="project" value="UniProtKB"/>
</dbReference>
<dbReference type="GO" id="GO:0052659">
    <property type="term" value="F:inositol-1,3,4,5-tetrakisphosphate 5-phosphatase activity"/>
    <property type="evidence" value="ECO:0007669"/>
    <property type="project" value="RHEA"/>
</dbReference>
<dbReference type="GO" id="GO:0052658">
    <property type="term" value="F:inositol-1,4,5-trisphosphate 5-phosphatase activity"/>
    <property type="evidence" value="ECO:0007669"/>
    <property type="project" value="RHEA"/>
</dbReference>
<dbReference type="GO" id="GO:0004445">
    <property type="term" value="F:inositol-polyphosphate 5-phosphatase activity"/>
    <property type="evidence" value="ECO:0000314"/>
    <property type="project" value="UniProtKB"/>
</dbReference>
<dbReference type="GO" id="GO:1900737">
    <property type="term" value="P:negative regulation of phospholipase C-activating G protein-coupled receptor signaling pathway"/>
    <property type="evidence" value="ECO:0000250"/>
    <property type="project" value="UniProtKB"/>
</dbReference>
<dbReference type="GO" id="GO:0046856">
    <property type="term" value="P:phosphatidylinositol dephosphorylation"/>
    <property type="evidence" value="ECO:0007669"/>
    <property type="project" value="InterPro"/>
</dbReference>
<dbReference type="CDD" id="cd09092">
    <property type="entry name" value="INPP5A"/>
    <property type="match status" value="1"/>
</dbReference>
<dbReference type="Gene3D" id="3.60.10.10">
    <property type="entry name" value="Endonuclease/exonuclease/phosphatase"/>
    <property type="match status" value="1"/>
</dbReference>
<dbReference type="InterPro" id="IPR036691">
    <property type="entry name" value="Endo/exonu/phosph_ase_sf"/>
</dbReference>
<dbReference type="InterPro" id="IPR039737">
    <property type="entry name" value="INPP5A"/>
</dbReference>
<dbReference type="InterPro" id="IPR000300">
    <property type="entry name" value="IPPc"/>
</dbReference>
<dbReference type="PANTHER" id="PTHR12997:SF2">
    <property type="entry name" value="INOSITOL POLYPHOSPHATE-5-PHOSPHATASE A"/>
    <property type="match status" value="1"/>
</dbReference>
<dbReference type="PANTHER" id="PTHR12997">
    <property type="entry name" value="TYPE I INOSITOL-1,4,5-TRISPHOSPHATE 5-PHOSPHATASE"/>
    <property type="match status" value="1"/>
</dbReference>
<dbReference type="Pfam" id="PF22669">
    <property type="entry name" value="Exo_endo_phos2"/>
    <property type="match status" value="1"/>
</dbReference>
<dbReference type="SMART" id="SM00128">
    <property type="entry name" value="IPPc"/>
    <property type="match status" value="1"/>
</dbReference>
<dbReference type="SUPFAM" id="SSF56219">
    <property type="entry name" value="DNase I-like"/>
    <property type="match status" value="1"/>
</dbReference>
<accession>Q29467</accession>
<name>I5P1_CANLF</name>
<protein>
    <recommendedName>
        <fullName>Inositol polyphosphate-5-phosphatase A</fullName>
        <ecNumber evidence="3">3.1.3.56</ecNumber>
    </recommendedName>
    <alternativeName>
        <fullName>Type I inositol 1,4,5-trisphosphate 5-phosphatase</fullName>
        <shortName>5PTase</shortName>
    </alternativeName>
</protein>
<keyword id="KW-1003">Cell membrane</keyword>
<keyword id="KW-0966">Cell projection</keyword>
<keyword id="KW-0378">Hydrolase</keyword>
<keyword id="KW-0449">Lipoprotein</keyword>
<keyword id="KW-0472">Membrane</keyword>
<keyword id="KW-0636">Prenylation</keyword>
<keyword id="KW-1185">Reference proteome</keyword>
<sequence>MAGKAAAPGTAVLLVTANVGSLFDDPENLQKNWLREFYQVVHTHKPHFMALHCQEFGGKNYEASMSHVDKFVKELLSSDAMKEYNRARVYLDENFKSQEHFTALGSFYFLHESLKNIYQFDFKAKKYKKVTGKEIYSDTLESTPMLEKEKFPQDYFPECKWSRKGFVRTRWCVADCAFDLVNIHLFHDASNLVAWETSPSVYSGIRHKALGYVLDRIIDQRFEKVSYFVFGDFNFRLDSKSVVETLCTKATMQTVRAADTNEVVKLIFRESDNDRKVMLQLEKKLFHYFNQEVFRDNNGTALLEFDKELSVFKDRLYELDISFPPSYPYSEDSGQGRQYMNTRCPAWCDRVLMSPSARELILKSESEEKVVTYDHIGPNVCMGDHKPVFLAFRIAPGAGKPHAHVHKCCVVQ</sequence>
<comment type="function">
    <text evidence="2 3">Phosphatase that specifically hydrolyzes the 5-phosphate of inositol 1,4,5-trisphosphate to inositol 1,4-bisphosphate, and inositol 1,3,4,5-tetrasphosphate to inositol 1,3,4-trisphosphate (PubMed:8198557). Plays a crucial role in the survival of cerebellar Purkinje cells (By similarity).</text>
</comment>
<comment type="catalytic activity">
    <reaction evidence="3">
        <text>1D-myo-inositol 1,4,5-trisphosphate + H2O = 1D-myo-inositol 1,4-bisphosphate + phosphate</text>
        <dbReference type="Rhea" id="RHEA:19797"/>
        <dbReference type="ChEBI" id="CHEBI:15377"/>
        <dbReference type="ChEBI" id="CHEBI:43474"/>
        <dbReference type="ChEBI" id="CHEBI:58282"/>
        <dbReference type="ChEBI" id="CHEBI:203600"/>
        <dbReference type="EC" id="3.1.3.56"/>
    </reaction>
    <physiologicalReaction direction="left-to-right" evidence="5">
        <dbReference type="Rhea" id="RHEA:19798"/>
    </physiologicalReaction>
</comment>
<comment type="catalytic activity">
    <reaction evidence="3">
        <text>1D-myo-inositol 1,3,4,5-tetrakisphosphate + H2O = 1D-myo-inositol 1,3,4-trisphosphate + phosphate</text>
        <dbReference type="Rhea" id="RHEA:11392"/>
        <dbReference type="ChEBI" id="CHEBI:15377"/>
        <dbReference type="ChEBI" id="CHEBI:43474"/>
        <dbReference type="ChEBI" id="CHEBI:57895"/>
        <dbReference type="ChEBI" id="CHEBI:58414"/>
        <dbReference type="EC" id="3.1.3.56"/>
    </reaction>
    <physiologicalReaction direction="left-to-right" evidence="5">
        <dbReference type="Rhea" id="RHEA:11393"/>
    </physiologicalReaction>
</comment>
<comment type="activity regulation">
    <text evidence="3">Inhibited by EDTA and 2,3-bisphosphoglycerate.</text>
</comment>
<comment type="biophysicochemical properties">
    <kinetics>
        <KM evidence="3">28.3 uM for inositol 1,4,5- trisphosphate</KM>
        <KM evidence="3">3.4 uM for inositol 1,3,4,5-tetrasphosphate</KM>
    </kinetics>
</comment>
<comment type="subunit">
    <text evidence="2">Interacts with TASOR.</text>
</comment>
<comment type="subcellular location">
    <subcellularLocation>
        <location evidence="1">Cell membrane</location>
        <topology evidence="1">Lipid-anchor</topology>
    </subcellularLocation>
    <subcellularLocation>
        <location evidence="2">Cell projection</location>
        <location evidence="2">Dendrite</location>
    </subcellularLocation>
</comment>
<comment type="PTM">
    <text evidence="1">Isoprenylation at Cys-409 is required for localization at the membrane.</text>
</comment>
<comment type="similarity">
    <text evidence="4">Belongs to the inositol 1,4,5-trisphosphate 5-phosphatase type I family.</text>
</comment>